<comment type="function">
    <text>Carrier of the growing fatty acid chain in fatty acid biosynthesis.</text>
</comment>
<comment type="pathway">
    <text>Lipid metabolism; fatty acid biosynthesis.</text>
</comment>
<comment type="subcellular location">
    <subcellularLocation>
        <location>Plastid</location>
        <location>Chloroplast</location>
    </subcellularLocation>
</comment>
<comment type="PTM">
    <text evidence="1">4'-phosphopantetheine is transferred from CoA to a specific serine of apo-ACP by acpS. This modification is essential for activity because fatty acids are bound in thioester linkage to the sulfhydryl of the prosthetic group (By similarity).</text>
</comment>
<comment type="similarity">
    <text evidence="4">Belongs to the acyl carrier protein (ACP) family.</text>
</comment>
<protein>
    <recommendedName>
        <fullName>Acyl carrier protein 4, chloroplastic</fullName>
        <shortName>ACP</shortName>
    </recommendedName>
</protein>
<gene>
    <name type="primary">ACL1</name>
</gene>
<feature type="transit peptide" description="Chloroplast" evidence="2">
    <location>
        <begin position="1"/>
        <end position="55"/>
    </location>
</feature>
<feature type="chain" id="PRO_0000000580" description="Acyl carrier protein 4, chloroplastic">
    <location>
        <begin position="56"/>
        <end position="139"/>
    </location>
</feature>
<feature type="domain" description="Carrier" evidence="3">
    <location>
        <begin position="59"/>
        <end position="134"/>
    </location>
</feature>
<feature type="modified residue" description="O-(pantetheine 4'-phosphoryl)serine" evidence="3">
    <location>
        <position position="94"/>
    </location>
</feature>
<accession>P52414</accession>
<name>ACP4_CUPLA</name>
<reference key="1">
    <citation type="submission" date="1996-01" db="EMBL/GenBank/DDBJ databases">
        <authorList>
            <person name="Voetz M."/>
            <person name="Brueck F.M."/>
            <person name="Schuch R."/>
            <person name="Spener F."/>
            <person name="Schell J."/>
            <person name="Toepfer R."/>
        </authorList>
    </citation>
    <scope>NUCLEOTIDE SEQUENCE [GENOMIC DNA]</scope>
    <source>
        <tissue>Leaf</tissue>
    </source>
</reference>
<evidence type="ECO:0000250" key="1"/>
<evidence type="ECO:0000255" key="2"/>
<evidence type="ECO:0000255" key="3">
    <source>
        <dbReference type="PROSITE-ProRule" id="PRU00258"/>
    </source>
</evidence>
<evidence type="ECO:0000305" key="4"/>
<sequence>MASAAAGASICIKSASCSPLAPGRISSLRSVSLPVSRKSFPSLRSSKGSFARVSCQAKPETVAKVCRIVKKQLALPDDSEVNGLSKFSALGADSLDTVEIVMGLEEEFGISVEEESAQSIQTVQDAADLIEKLMEKKGH</sequence>
<organism>
    <name type="scientific">Cuphea lanceolata</name>
    <name type="common">Cigar flower</name>
    <dbReference type="NCBI Taxonomy" id="3930"/>
    <lineage>
        <taxon>Eukaryota</taxon>
        <taxon>Viridiplantae</taxon>
        <taxon>Streptophyta</taxon>
        <taxon>Embryophyta</taxon>
        <taxon>Tracheophyta</taxon>
        <taxon>Spermatophyta</taxon>
        <taxon>Magnoliopsida</taxon>
        <taxon>eudicotyledons</taxon>
        <taxon>Gunneridae</taxon>
        <taxon>Pentapetalae</taxon>
        <taxon>rosids</taxon>
        <taxon>malvids</taxon>
        <taxon>Myrtales</taxon>
        <taxon>Lythraceae</taxon>
        <taxon>Cuphea</taxon>
    </lineage>
</organism>
<proteinExistence type="inferred from homology"/>
<keyword id="KW-0150">Chloroplast</keyword>
<keyword id="KW-0275">Fatty acid biosynthesis</keyword>
<keyword id="KW-0276">Fatty acid metabolism</keyword>
<keyword id="KW-0444">Lipid biosynthesis</keyword>
<keyword id="KW-0443">Lipid metabolism</keyword>
<keyword id="KW-0596">Phosphopantetheine</keyword>
<keyword id="KW-0597">Phosphoprotein</keyword>
<keyword id="KW-0934">Plastid</keyword>
<keyword id="KW-0809">Transit peptide</keyword>
<dbReference type="EMBL" id="X95253">
    <property type="protein sequence ID" value="CAA64542.1"/>
    <property type="molecule type" value="Genomic_DNA"/>
</dbReference>
<dbReference type="SMR" id="P52414"/>
<dbReference type="UniPathway" id="UPA00094"/>
<dbReference type="GO" id="GO:0009507">
    <property type="term" value="C:chloroplast"/>
    <property type="evidence" value="ECO:0007669"/>
    <property type="project" value="UniProtKB-SubCell"/>
</dbReference>
<dbReference type="GO" id="GO:0000036">
    <property type="term" value="F:acyl carrier activity"/>
    <property type="evidence" value="ECO:0007669"/>
    <property type="project" value="InterPro"/>
</dbReference>
<dbReference type="GO" id="GO:0031177">
    <property type="term" value="F:phosphopantetheine binding"/>
    <property type="evidence" value="ECO:0007669"/>
    <property type="project" value="InterPro"/>
</dbReference>
<dbReference type="Gene3D" id="1.10.1200.10">
    <property type="entry name" value="ACP-like"/>
    <property type="match status" value="1"/>
</dbReference>
<dbReference type="HAMAP" id="MF_01217">
    <property type="entry name" value="Acyl_carrier"/>
    <property type="match status" value="1"/>
</dbReference>
<dbReference type="InterPro" id="IPR003231">
    <property type="entry name" value="ACP"/>
</dbReference>
<dbReference type="InterPro" id="IPR036736">
    <property type="entry name" value="ACP-like_sf"/>
</dbReference>
<dbReference type="InterPro" id="IPR044813">
    <property type="entry name" value="ACP_chloroplastic"/>
</dbReference>
<dbReference type="InterPro" id="IPR020806">
    <property type="entry name" value="PKS_PP-bd"/>
</dbReference>
<dbReference type="InterPro" id="IPR009081">
    <property type="entry name" value="PP-bd_ACP"/>
</dbReference>
<dbReference type="InterPro" id="IPR006162">
    <property type="entry name" value="Ppantetheine_attach_site"/>
</dbReference>
<dbReference type="NCBIfam" id="TIGR00517">
    <property type="entry name" value="acyl_carrier"/>
    <property type="match status" value="1"/>
</dbReference>
<dbReference type="PANTHER" id="PTHR46153">
    <property type="entry name" value="ACYL CARRIER PROTEIN"/>
    <property type="match status" value="1"/>
</dbReference>
<dbReference type="PANTHER" id="PTHR46153:SF20">
    <property type="entry name" value="ACYL CARRIER PROTEIN 2, CHLOROPLASTIC-RELATED"/>
    <property type="match status" value="1"/>
</dbReference>
<dbReference type="Pfam" id="PF00550">
    <property type="entry name" value="PP-binding"/>
    <property type="match status" value="1"/>
</dbReference>
<dbReference type="SMART" id="SM00823">
    <property type="entry name" value="PKS_PP"/>
    <property type="match status" value="1"/>
</dbReference>
<dbReference type="SUPFAM" id="SSF47336">
    <property type="entry name" value="ACP-like"/>
    <property type="match status" value="1"/>
</dbReference>
<dbReference type="PROSITE" id="PS50075">
    <property type="entry name" value="CARRIER"/>
    <property type="match status" value="1"/>
</dbReference>
<dbReference type="PROSITE" id="PS00012">
    <property type="entry name" value="PHOSPHOPANTETHEINE"/>
    <property type="match status" value="1"/>
</dbReference>